<gene>
    <name type="primary">Adrb1</name>
    <name type="synonym">Adrb1r</name>
</gene>
<protein>
    <recommendedName>
        <fullName>Beta-1 adrenergic receptor</fullName>
    </recommendedName>
    <alternativeName>
        <fullName>Beta-1 adrenoreceptor</fullName>
        <shortName>Beta-1 adrenoceptor</shortName>
    </alternativeName>
</protein>
<proteinExistence type="evidence at protein level"/>
<comment type="function">
    <text evidence="2 3">Beta-adrenergic receptors mediate the catecholamine-induced activation of adenylate cyclase through the action of G proteins. This receptor binds epinephrine and norepinephrine with approximately equal affinity. Mediates Ras activation through G(s)-alpha- and cAMP-mediated signaling (By similarity). Involved in the regulation of sleep/wake behaviors (By similarity).</text>
</comment>
<comment type="subunit">
    <text evidence="1 8">Interacts (via C-terminus PDZ motif) with RAPGEF2; the interaction is direct (By similarity). Interacts with GOPC, MAGI3 and DLG4.</text>
</comment>
<comment type="interaction">
    <interactant intactId="EBI-991303">
        <id>P18090</id>
    </interactant>
    <interactant intactId="EBI-696226">
        <id>Q9JK71</id>
        <label>Magi3</label>
    </interactant>
    <organismsDiffer>false</organismsDiffer>
    <experiments>3</experiments>
</comment>
<comment type="subcellular location">
    <subcellularLocation>
        <location evidence="7">Cell membrane</location>
        <topology evidence="7">Multi-pass membrane protein</topology>
    </subcellularLocation>
    <subcellularLocation>
        <location evidence="1">Early endosome</location>
    </subcellularLocation>
    <text evidence="1">Localized at the plasma membrane. Found in the Golgi upon GOPC overexpression (By similarity). Colocalizes with RAPGEF2 at the plasma membrane.</text>
</comment>
<comment type="tissue specificity">
    <text evidence="7">Expressed in cortical neurons and coronary artery smooth muscle cells (at protein level).</text>
</comment>
<comment type="domain">
    <text>The PDZ domain-binding motif mediates competitive interactions with GOPC, MAGI3 and DLG4 and plays a role in subcellular location of the receptor.</text>
</comment>
<comment type="PTM">
    <text>Homologous desensitization of the receptor is mediated by its phosphorylation by beta-adrenergic receptor kinase.</text>
</comment>
<comment type="similarity">
    <text evidence="5">Belongs to the G-protein coupled receptor 1 family. Adrenergic receptor subfamily. ADRB1 sub-subfamily.</text>
</comment>
<name>ADRB1_RAT</name>
<evidence type="ECO:0000250" key="1"/>
<evidence type="ECO:0000250" key="2">
    <source>
        <dbReference type="UniProtKB" id="P08588"/>
    </source>
</evidence>
<evidence type="ECO:0000250" key="3">
    <source>
        <dbReference type="UniProtKB" id="P34971"/>
    </source>
</evidence>
<evidence type="ECO:0000255" key="4"/>
<evidence type="ECO:0000255" key="5">
    <source>
        <dbReference type="PROSITE-ProRule" id="PRU00521"/>
    </source>
</evidence>
<evidence type="ECO:0000256" key="6">
    <source>
        <dbReference type="SAM" id="MobiDB-lite"/>
    </source>
</evidence>
<evidence type="ECO:0000269" key="7">
    <source>
    </source>
</evidence>
<evidence type="ECO:0000269" key="8">
    <source>
    </source>
</evidence>
<evidence type="ECO:0000305" key="9"/>
<evidence type="ECO:0007744" key="10">
    <source>
    </source>
</evidence>
<accession>P18090</accession>
<keyword id="KW-1003">Cell membrane</keyword>
<keyword id="KW-1015">Disulfide bond</keyword>
<keyword id="KW-0967">Endosome</keyword>
<keyword id="KW-0297">G-protein coupled receptor</keyword>
<keyword id="KW-0325">Glycoprotein</keyword>
<keyword id="KW-0449">Lipoprotein</keyword>
<keyword id="KW-0472">Membrane</keyword>
<keyword id="KW-0564">Palmitate</keyword>
<keyword id="KW-0597">Phosphoprotein</keyword>
<keyword id="KW-0675">Receptor</keyword>
<keyword id="KW-1185">Reference proteome</keyword>
<keyword id="KW-0807">Transducer</keyword>
<keyword id="KW-0812">Transmembrane</keyword>
<keyword id="KW-1133">Transmembrane helix</keyword>
<reference key="1">
    <citation type="journal article" date="1990" name="J. Biol. Chem.">
        <title>Molecular cloning and expression of the rat beta 1-adrenergic receptor gene.</title>
        <authorList>
            <person name="Machida C.A."/>
            <person name="Bunzow J.R."/>
            <person name="Searles R.P."/>
            <person name="van Tol H.H.M."/>
            <person name="Tester B."/>
            <person name="Neve K.A."/>
            <person name="Teal P."/>
            <person name="Nipper V."/>
            <person name="Civelli O."/>
        </authorList>
    </citation>
    <scope>NUCLEOTIDE SEQUENCE [GENOMIC DNA]</scope>
</reference>
<reference key="2">
    <citation type="journal article" date="1990" name="Nucleic Acids Res.">
        <title>Primary structure of the rat beta-1 adrenergic receptor gene.</title>
        <authorList>
            <person name="Shimomura H."/>
            <person name="Terada A."/>
        </authorList>
    </citation>
    <scope>NUCLEOTIDE SEQUENCE [GENOMIC DNA]</scope>
</reference>
<reference key="3">
    <citation type="journal article" date="2002" name="Mol. Cell. Biol.">
        <title>Direct binding of the beta1 adrenergic receptor to the cyclic AMP-dependent guanine nucleotide exchange factor CNrasGEF leads to Ras activation.</title>
        <authorList>
            <person name="Pak Y."/>
            <person name="Pham N."/>
            <person name="Rotin D."/>
        </authorList>
    </citation>
    <scope>SUBCELLULAR LOCATION</scope>
    <scope>TISSUE SPECIFICITY</scope>
</reference>
<reference key="4">
    <citation type="journal article" date="2006" name="J. Biol. Chem.">
        <title>Proteomic analysis of beta1-adrenergic receptor interactions with PDZ scaffold proteins.</title>
        <authorList>
            <person name="He J."/>
            <person name="Bellini M."/>
            <person name="Inuzuka H."/>
            <person name="Xu J."/>
            <person name="Xiong Y."/>
            <person name="Yang X."/>
            <person name="Castleberry A.M."/>
            <person name="Hall R.A."/>
        </authorList>
    </citation>
    <scope>INTERACTION WITH MAGI3</scope>
    <scope>MUTAGENESIS OF VAL-466</scope>
</reference>
<reference key="5">
    <citation type="journal article" date="2012" name="Nat. Commun.">
        <title>Quantitative maps of protein phosphorylation sites across 14 different rat organs and tissues.</title>
        <authorList>
            <person name="Lundby A."/>
            <person name="Secher A."/>
            <person name="Lage K."/>
            <person name="Nordsborg N.B."/>
            <person name="Dmytriyev A."/>
            <person name="Lundby C."/>
            <person name="Olsen J.V."/>
        </authorList>
    </citation>
    <scope>PHOSPHORYLATION [LARGE SCALE ANALYSIS] AT SER-417</scope>
    <scope>IDENTIFICATION BY MASS SPECTROMETRY [LARGE SCALE ANALYSIS]</scope>
</reference>
<organism>
    <name type="scientific">Rattus norvegicus</name>
    <name type="common">Rat</name>
    <dbReference type="NCBI Taxonomy" id="10116"/>
    <lineage>
        <taxon>Eukaryota</taxon>
        <taxon>Metazoa</taxon>
        <taxon>Chordata</taxon>
        <taxon>Craniata</taxon>
        <taxon>Vertebrata</taxon>
        <taxon>Euteleostomi</taxon>
        <taxon>Mammalia</taxon>
        <taxon>Eutheria</taxon>
        <taxon>Euarchontoglires</taxon>
        <taxon>Glires</taxon>
        <taxon>Rodentia</taxon>
        <taxon>Myomorpha</taxon>
        <taxon>Muroidea</taxon>
        <taxon>Muridae</taxon>
        <taxon>Murinae</taxon>
        <taxon>Rattus</taxon>
    </lineage>
</organism>
<feature type="chain" id="PRO_0000069124" description="Beta-1 adrenergic receptor">
    <location>
        <begin position="1"/>
        <end position="466"/>
    </location>
</feature>
<feature type="topological domain" description="Extracellular" evidence="1">
    <location>
        <begin position="1"/>
        <end position="55"/>
    </location>
</feature>
<feature type="transmembrane region" description="Helical; Name=1" evidence="1">
    <location>
        <begin position="56"/>
        <end position="84"/>
    </location>
</feature>
<feature type="topological domain" description="Cytoplasmic" evidence="1">
    <location>
        <begin position="85"/>
        <end position="93"/>
    </location>
</feature>
<feature type="transmembrane region" description="Helical; Name=2" evidence="1">
    <location>
        <begin position="94"/>
        <end position="120"/>
    </location>
</feature>
<feature type="topological domain" description="Extracellular" evidence="1">
    <location>
        <begin position="121"/>
        <end position="132"/>
    </location>
</feature>
<feature type="transmembrane region" description="Helical; Name=3" evidence="1">
    <location>
        <begin position="133"/>
        <end position="154"/>
    </location>
</feature>
<feature type="topological domain" description="Cytoplasmic" evidence="1">
    <location>
        <begin position="155"/>
        <end position="172"/>
    </location>
</feature>
<feature type="transmembrane region" description="Helical; Name=4" evidence="1">
    <location>
        <begin position="173"/>
        <end position="196"/>
    </location>
</feature>
<feature type="topological domain" description="Extracellular" evidence="1">
    <location>
        <begin position="197"/>
        <end position="222"/>
    </location>
</feature>
<feature type="transmembrane region" description="Helical; Name=5" evidence="1">
    <location>
        <begin position="223"/>
        <end position="248"/>
    </location>
</feature>
<feature type="topological domain" description="Cytoplasmic" evidence="1">
    <location>
        <begin position="249"/>
        <end position="308"/>
    </location>
</feature>
<feature type="transmembrane region" description="Helical; Name=6" evidence="1">
    <location>
        <begin position="309"/>
        <end position="338"/>
    </location>
</feature>
<feature type="topological domain" description="Extracellular" evidence="1">
    <location>
        <begin position="339"/>
        <end position="343"/>
    </location>
</feature>
<feature type="transmembrane region" description="Helical; Name=7" evidence="1">
    <location>
        <begin position="344"/>
        <end position="366"/>
    </location>
</feature>
<feature type="topological domain" description="Cytoplasmic" evidence="1">
    <location>
        <begin position="367"/>
        <end position="466"/>
    </location>
</feature>
<feature type="region of interest" description="Disordered" evidence="6">
    <location>
        <begin position="264"/>
        <end position="302"/>
    </location>
</feature>
<feature type="region of interest" description="Disordered" evidence="6">
    <location>
        <begin position="398"/>
        <end position="466"/>
    </location>
</feature>
<feature type="short sequence motif" description="PDZ-Binding" evidence="1">
    <location>
        <begin position="463"/>
        <end position="466"/>
    </location>
</feature>
<feature type="compositionally biased region" description="Pro residues" evidence="6">
    <location>
        <begin position="269"/>
        <end position="286"/>
    </location>
</feature>
<feature type="modified residue" description="Phosphoserine; by PKA" evidence="4">
    <location>
        <position position="296"/>
    </location>
</feature>
<feature type="modified residue" description="Phosphoserine; by PKA" evidence="4">
    <location>
        <position position="301"/>
    </location>
</feature>
<feature type="modified residue" description="Phosphoserine; by PKA" evidence="4">
    <location>
        <position position="401"/>
    </location>
</feature>
<feature type="modified residue" description="Phosphoserine" evidence="10">
    <location>
        <position position="417"/>
    </location>
</feature>
<feature type="lipid moiety-binding region" description="S-palmitoyl cysteine" evidence="1">
    <location>
        <position position="381"/>
    </location>
</feature>
<feature type="glycosylation site" description="N-linked (GlcNAc...) asparagine" evidence="9">
    <location>
        <position position="15"/>
    </location>
</feature>
<feature type="disulfide bond" evidence="5">
    <location>
        <begin position="131"/>
        <end position="216"/>
    </location>
</feature>
<feature type="disulfide bond" evidence="5">
    <location>
        <begin position="209"/>
        <end position="215"/>
    </location>
</feature>
<feature type="mutagenesis site" description="Abolishes interaction with MAGI3." evidence="8">
    <original>V</original>
    <variation>A</variation>
    <location>
        <position position="466"/>
    </location>
</feature>
<feature type="sequence conflict" description="In Ref. 2; BAA00527." evidence="9" ref="2">
    <original>L</original>
    <variation>S</variation>
    <location>
        <position position="162"/>
    </location>
</feature>
<feature type="sequence conflict" description="In Ref. 2; BAA00527." evidence="9" ref="2">
    <original>T</original>
    <variation>S</variation>
    <location>
        <position position="267"/>
    </location>
</feature>
<sequence>MGAGALALGASEPCNLSSAAPLPDGAATAARLLVLASPPASLLPPASEGSAPLSQQWTAGMGLLLALIVLLIVVGNVLVIVAIAKTPRLQTLTNLFIMSLASADLVMGLLVVPFGATIVVWGRWEYGSFFCELWTSVDVLCVTASIETLCVIALDRYLAITLPFRYQSLLTRARARALVCTVWAISALVSFLPILMHWWRAESDEARRCYNDPKCCDFVTNRAYAIASSVVSFYVPLCIMAFVYLRVFREAQKQVKKIDSCERRFLTGPPRPPSPAPSPSPGPPRPADSLANGRSSKRRPSRLVALREQKALKTLGIIMGVFTLCWLPFFLANVVKAFHRDLVPDRLFVFFNWLGYANSAFNPIIYCRSPDFRKAFQRLLCCARRAACRRRAAHGDRPRASGCLARAGPPPSPGAPSDDDDDDAGATPPARLLEPWAGCNGGTTTVDSDSSLDEPGRQGFSSESKV</sequence>
<dbReference type="EMBL" id="J05561">
    <property type="protein sequence ID" value="AAA40792.1"/>
    <property type="molecule type" value="Genomic_DNA"/>
</dbReference>
<dbReference type="EMBL" id="D00634">
    <property type="protein sequence ID" value="BAA00527.1"/>
    <property type="molecule type" value="Genomic_DNA"/>
</dbReference>
<dbReference type="PIR" id="S12591">
    <property type="entry name" value="S12591"/>
</dbReference>
<dbReference type="RefSeq" id="NP_036833.1">
    <property type="nucleotide sequence ID" value="NM_012701.1"/>
</dbReference>
<dbReference type="SMR" id="P18090"/>
<dbReference type="CORUM" id="P18090"/>
<dbReference type="DIP" id="DIP-36293N"/>
<dbReference type="FunCoup" id="P18090">
    <property type="interactions" value="535"/>
</dbReference>
<dbReference type="IntAct" id="P18090">
    <property type="interactions" value="2"/>
</dbReference>
<dbReference type="STRING" id="10116.ENSRNOP00000022813"/>
<dbReference type="BindingDB" id="P18090"/>
<dbReference type="ChEMBL" id="CHEMBL3252"/>
<dbReference type="DrugCentral" id="P18090"/>
<dbReference type="GuidetoPHARMACOLOGY" id="28"/>
<dbReference type="GlyCosmos" id="P18090">
    <property type="glycosylation" value="1 site, No reported glycans"/>
</dbReference>
<dbReference type="GlyGen" id="P18090">
    <property type="glycosylation" value="5 sites, 1 O-linked glycan (1 site)"/>
</dbReference>
<dbReference type="iPTMnet" id="P18090"/>
<dbReference type="PhosphoSitePlus" id="P18090"/>
<dbReference type="PaxDb" id="10116-ENSRNOP00000022813"/>
<dbReference type="GeneID" id="24925"/>
<dbReference type="KEGG" id="rno:24925"/>
<dbReference type="UCSC" id="RGD:2059">
    <property type="organism name" value="rat"/>
</dbReference>
<dbReference type="AGR" id="RGD:2059"/>
<dbReference type="CTD" id="153"/>
<dbReference type="RGD" id="2059">
    <property type="gene designation" value="Adrb1"/>
</dbReference>
<dbReference type="eggNOG" id="KOG3656">
    <property type="taxonomic scope" value="Eukaryota"/>
</dbReference>
<dbReference type="InParanoid" id="P18090"/>
<dbReference type="PhylomeDB" id="P18090"/>
<dbReference type="TreeFam" id="TF316350"/>
<dbReference type="Reactome" id="R-RNO-390696">
    <property type="pathway name" value="Adrenoceptors"/>
</dbReference>
<dbReference type="PRO" id="PR:P18090"/>
<dbReference type="Proteomes" id="UP000002494">
    <property type="component" value="Unplaced"/>
</dbReference>
<dbReference type="GO" id="GO:0005769">
    <property type="term" value="C:early endosome"/>
    <property type="evidence" value="ECO:0000250"/>
    <property type="project" value="UniProtKB"/>
</dbReference>
<dbReference type="GO" id="GO:0016020">
    <property type="term" value="C:membrane"/>
    <property type="evidence" value="ECO:0000266"/>
    <property type="project" value="RGD"/>
</dbReference>
<dbReference type="GO" id="GO:0098992">
    <property type="term" value="C:neuronal dense core vesicle"/>
    <property type="evidence" value="ECO:0000266"/>
    <property type="project" value="RGD"/>
</dbReference>
<dbReference type="GO" id="GO:0005886">
    <property type="term" value="C:plasma membrane"/>
    <property type="evidence" value="ECO:0000314"/>
    <property type="project" value="UniProtKB"/>
</dbReference>
<dbReference type="GO" id="GO:0098794">
    <property type="term" value="C:postsynapse"/>
    <property type="evidence" value="ECO:0007669"/>
    <property type="project" value="GOC"/>
</dbReference>
<dbReference type="GO" id="GO:0098685">
    <property type="term" value="C:Schaffer collateral - CA1 synapse"/>
    <property type="evidence" value="ECO:0000266"/>
    <property type="project" value="RGD"/>
</dbReference>
<dbReference type="GO" id="GO:0031694">
    <property type="term" value="F:alpha-2A adrenergic receptor binding"/>
    <property type="evidence" value="ECO:0000266"/>
    <property type="project" value="RGD"/>
</dbReference>
<dbReference type="GO" id="GO:0043176">
    <property type="term" value="F:amine binding"/>
    <property type="evidence" value="ECO:0000353"/>
    <property type="project" value="RGD"/>
</dbReference>
<dbReference type="GO" id="GO:0004940">
    <property type="term" value="F:beta1-adrenergic receptor activity"/>
    <property type="evidence" value="ECO:0000314"/>
    <property type="project" value="RGD"/>
</dbReference>
<dbReference type="GO" id="GO:0099579">
    <property type="term" value="F:G protein-coupled neurotransmitter receptor activity involved in regulation of postsynaptic membrane potential"/>
    <property type="evidence" value="ECO:0000266"/>
    <property type="project" value="RGD"/>
</dbReference>
<dbReference type="GO" id="GO:0030165">
    <property type="term" value="F:PDZ domain binding"/>
    <property type="evidence" value="ECO:0000266"/>
    <property type="project" value="RGD"/>
</dbReference>
<dbReference type="GO" id="GO:0046982">
    <property type="term" value="F:protein heterodimerization activity"/>
    <property type="evidence" value="ECO:0000266"/>
    <property type="project" value="RGD"/>
</dbReference>
<dbReference type="GO" id="GO:0071880">
    <property type="term" value="P:adenylate cyclase-activating adrenergic receptor signaling pathway"/>
    <property type="evidence" value="ECO:0000250"/>
    <property type="project" value="UniProtKB"/>
</dbReference>
<dbReference type="GO" id="GO:0007189">
    <property type="term" value="P:adenylate cyclase-activating G protein-coupled receptor signaling pathway"/>
    <property type="evidence" value="ECO:0000266"/>
    <property type="project" value="RGD"/>
</dbReference>
<dbReference type="GO" id="GO:0050873">
    <property type="term" value="P:brown fat cell differentiation"/>
    <property type="evidence" value="ECO:0000266"/>
    <property type="project" value="RGD"/>
</dbReference>
<dbReference type="GO" id="GO:0002024">
    <property type="term" value="P:diet induced thermogenesis"/>
    <property type="evidence" value="ECO:0000266"/>
    <property type="project" value="RGD"/>
</dbReference>
<dbReference type="GO" id="GO:0042596">
    <property type="term" value="P:fear response"/>
    <property type="evidence" value="ECO:0000266"/>
    <property type="project" value="RGD"/>
</dbReference>
<dbReference type="GO" id="GO:0007186">
    <property type="term" value="P:G protein-coupled receptor signaling pathway"/>
    <property type="evidence" value="ECO:0000314"/>
    <property type="project" value="RGD"/>
</dbReference>
<dbReference type="GO" id="GO:0005980">
    <property type="term" value="P:glycogen catabolic process"/>
    <property type="evidence" value="ECO:0000314"/>
    <property type="project" value="RGD"/>
</dbReference>
<dbReference type="GO" id="GO:0031649">
    <property type="term" value="P:heat generation"/>
    <property type="evidence" value="ECO:0000266"/>
    <property type="project" value="RGD"/>
</dbReference>
<dbReference type="GO" id="GO:0060080">
    <property type="term" value="P:inhibitory postsynaptic potential"/>
    <property type="evidence" value="ECO:0000315"/>
    <property type="project" value="RGD"/>
</dbReference>
<dbReference type="GO" id="GO:0055088">
    <property type="term" value="P:lipid homeostasis"/>
    <property type="evidence" value="ECO:0000315"/>
    <property type="project" value="RGD"/>
</dbReference>
<dbReference type="GO" id="GO:0007613">
    <property type="term" value="P:memory"/>
    <property type="evidence" value="ECO:0000315"/>
    <property type="project" value="RGD"/>
</dbReference>
<dbReference type="GO" id="GO:0040015">
    <property type="term" value="P:negative regulation of multicellular organism growth"/>
    <property type="evidence" value="ECO:0000266"/>
    <property type="project" value="RGD"/>
</dbReference>
<dbReference type="GO" id="GO:0045986">
    <property type="term" value="P:negative regulation of smooth muscle contraction"/>
    <property type="evidence" value="ECO:0000315"/>
    <property type="project" value="RGD"/>
</dbReference>
<dbReference type="GO" id="GO:0035811">
    <property type="term" value="P:negative regulation of urine volume"/>
    <property type="evidence" value="ECO:0000314"/>
    <property type="project" value="RGD"/>
</dbReference>
<dbReference type="GO" id="GO:0002025">
    <property type="term" value="P:norepinephrine-epinephrine-mediated vasodilation involved in regulation of systemic arterial blood pressure"/>
    <property type="evidence" value="ECO:0000266"/>
    <property type="project" value="RGD"/>
</dbReference>
<dbReference type="GO" id="GO:0106071">
    <property type="term" value="P:positive regulation of adenylate cyclase-activating G protein-coupled receptor signaling pathway"/>
    <property type="evidence" value="ECO:0000315"/>
    <property type="project" value="RGD"/>
</dbReference>
<dbReference type="GO" id="GO:0043065">
    <property type="term" value="P:positive regulation of apoptotic process"/>
    <property type="evidence" value="ECO:0000315"/>
    <property type="project" value="RGD"/>
</dbReference>
<dbReference type="GO" id="GO:1905665">
    <property type="term" value="P:positive regulation of calcium ion import across plasma membrane"/>
    <property type="evidence" value="ECO:0000314"/>
    <property type="project" value="RGD"/>
</dbReference>
<dbReference type="GO" id="GO:0061051">
    <property type="term" value="P:positive regulation of cell growth involved in cardiac muscle cell development"/>
    <property type="evidence" value="ECO:0000315"/>
    <property type="project" value="RGD"/>
</dbReference>
<dbReference type="GO" id="GO:0120162">
    <property type="term" value="P:positive regulation of cold-induced thermogenesis"/>
    <property type="evidence" value="ECO:0000250"/>
    <property type="project" value="YuBioLab"/>
</dbReference>
<dbReference type="GO" id="GO:0010460">
    <property type="term" value="P:positive regulation of heart rate"/>
    <property type="evidence" value="ECO:0000315"/>
    <property type="project" value="RGD"/>
</dbReference>
<dbReference type="GO" id="GO:0001996">
    <property type="term" value="P:positive regulation of heart rate by epinephrine-norepinephrine"/>
    <property type="evidence" value="ECO:0000266"/>
    <property type="project" value="RGD"/>
</dbReference>
<dbReference type="GO" id="GO:1900273">
    <property type="term" value="P:positive regulation of long-term synaptic potentiation"/>
    <property type="evidence" value="ECO:0000314"/>
    <property type="project" value="RGD"/>
</dbReference>
<dbReference type="GO" id="GO:0043410">
    <property type="term" value="P:positive regulation of MAPK cascade"/>
    <property type="evidence" value="ECO:0000318"/>
    <property type="project" value="GO_Central"/>
</dbReference>
<dbReference type="GO" id="GO:0003084">
    <property type="term" value="P:positive regulation of systemic arterial blood pressure"/>
    <property type="evidence" value="ECO:0000315"/>
    <property type="project" value="RGD"/>
</dbReference>
<dbReference type="GO" id="GO:0001997">
    <property type="term" value="P:positive regulation of the force of heart contraction by epinephrine-norepinephrine"/>
    <property type="evidence" value="ECO:0000266"/>
    <property type="project" value="RGD"/>
</dbReference>
<dbReference type="GO" id="GO:0003061">
    <property type="term" value="P:positive regulation of the force of heart contraction by norepinephrine"/>
    <property type="evidence" value="ECO:0000314"/>
    <property type="project" value="RGD"/>
</dbReference>
<dbReference type="GO" id="GO:0033365">
    <property type="term" value="P:protein localization to organelle"/>
    <property type="evidence" value="ECO:0000314"/>
    <property type="project" value="RGD"/>
</dbReference>
<dbReference type="GO" id="GO:0051924">
    <property type="term" value="P:regulation of calcium ion transport"/>
    <property type="evidence" value="ECO:0000314"/>
    <property type="project" value="RGD"/>
</dbReference>
<dbReference type="GO" id="GO:0086004">
    <property type="term" value="P:regulation of cardiac muscle cell contraction"/>
    <property type="evidence" value="ECO:0000314"/>
    <property type="project" value="RGD"/>
</dbReference>
<dbReference type="GO" id="GO:0045187">
    <property type="term" value="P:regulation of circadian sleep/wake cycle, sleep"/>
    <property type="evidence" value="ECO:0000250"/>
    <property type="project" value="UniProtKB"/>
</dbReference>
<dbReference type="GO" id="GO:0009409">
    <property type="term" value="P:response to cold"/>
    <property type="evidence" value="ECO:0000266"/>
    <property type="project" value="RGD"/>
</dbReference>
<dbReference type="GO" id="GO:0007266">
    <property type="term" value="P:Rho protein signal transduction"/>
    <property type="evidence" value="ECO:0000315"/>
    <property type="project" value="RGD"/>
</dbReference>
<dbReference type="CDD" id="cd15958">
    <property type="entry name" value="7tmA_Beta1_AR"/>
    <property type="match status" value="1"/>
</dbReference>
<dbReference type="FunFam" id="1.20.1070.10:FF:000057">
    <property type="entry name" value="Beta-1 adrenergic receptor"/>
    <property type="match status" value="1"/>
</dbReference>
<dbReference type="Gene3D" id="1.20.1070.10">
    <property type="entry name" value="Rhodopsin 7-helix transmembrane proteins"/>
    <property type="match status" value="1"/>
</dbReference>
<dbReference type="InterPro" id="IPR002233">
    <property type="entry name" value="ADR_fam"/>
</dbReference>
<dbReference type="InterPro" id="IPR000507">
    <property type="entry name" value="ADRB1_rcpt"/>
</dbReference>
<dbReference type="InterPro" id="IPR000276">
    <property type="entry name" value="GPCR_Rhodpsn"/>
</dbReference>
<dbReference type="InterPro" id="IPR017452">
    <property type="entry name" value="GPCR_Rhodpsn_7TM"/>
</dbReference>
<dbReference type="PANTHER" id="PTHR24248">
    <property type="entry name" value="ADRENERGIC RECEPTOR-RELATED G-PROTEIN COUPLED RECEPTOR"/>
    <property type="match status" value="1"/>
</dbReference>
<dbReference type="PANTHER" id="PTHR24248:SF54">
    <property type="entry name" value="BETA-1 ADRENERGIC RECEPTOR"/>
    <property type="match status" value="1"/>
</dbReference>
<dbReference type="Pfam" id="PF00001">
    <property type="entry name" value="7tm_1"/>
    <property type="match status" value="1"/>
</dbReference>
<dbReference type="PRINTS" id="PR01103">
    <property type="entry name" value="ADRENERGICR"/>
</dbReference>
<dbReference type="PRINTS" id="PR00561">
    <property type="entry name" value="ADRENRGCB1AR"/>
</dbReference>
<dbReference type="PRINTS" id="PR00237">
    <property type="entry name" value="GPCRRHODOPSN"/>
</dbReference>
<dbReference type="SMART" id="SM01381">
    <property type="entry name" value="7TM_GPCR_Srsx"/>
    <property type="match status" value="1"/>
</dbReference>
<dbReference type="SUPFAM" id="SSF81321">
    <property type="entry name" value="Family A G protein-coupled receptor-like"/>
    <property type="match status" value="1"/>
</dbReference>
<dbReference type="PROSITE" id="PS00237">
    <property type="entry name" value="G_PROTEIN_RECEP_F1_1"/>
    <property type="match status" value="1"/>
</dbReference>
<dbReference type="PROSITE" id="PS50262">
    <property type="entry name" value="G_PROTEIN_RECEP_F1_2"/>
    <property type="match status" value="1"/>
</dbReference>